<dbReference type="EMBL" id="X04829">
    <property type="protein sequence ID" value="CAA28517.1"/>
    <property type="molecule type" value="Genomic_DNA"/>
</dbReference>
<dbReference type="EMBL" id="X07234">
    <property type="protein sequence ID" value="CAA30204.1"/>
    <property type="molecule type" value="Genomic_DNA"/>
</dbReference>
<dbReference type="PIR" id="B40782">
    <property type="entry name" value="VCXDS2"/>
</dbReference>
<dbReference type="RefSeq" id="NP_039802.1">
    <property type="nucleotide sequence ID" value="NC_001338.1"/>
</dbReference>
<dbReference type="SMR" id="P20224"/>
<dbReference type="KEGG" id="vg:2559664"/>
<dbReference type="OrthoDB" id="27964at10239"/>
<dbReference type="Proteomes" id="UP000000854">
    <property type="component" value="Genome"/>
</dbReference>
<dbReference type="GO" id="GO:0019028">
    <property type="term" value="C:viral capsid"/>
    <property type="evidence" value="ECO:0007669"/>
    <property type="project" value="UniProtKB-KW"/>
</dbReference>
<dbReference type="GO" id="GO:0003677">
    <property type="term" value="F:DNA binding"/>
    <property type="evidence" value="ECO:0007669"/>
    <property type="project" value="UniProtKB-KW"/>
</dbReference>
<accession>P20224</accession>
<keyword id="KW-0167">Capsid protein</keyword>
<keyword id="KW-0903">Direct protein sequencing</keyword>
<keyword id="KW-0238">DNA-binding</keyword>
<keyword id="KW-1185">Reference proteome</keyword>
<keyword id="KW-0946">Virion</keyword>
<proteinExistence type="evidence at protein level"/>
<gene>
    <name type="primary">VP2</name>
</gene>
<protein>
    <recommendedName>
        <fullName>Capsid protein VP2</fullName>
    </recommendedName>
</protein>
<reference key="1">
    <citation type="journal article" date="1987" name="Mol. Gen. Genet.">
        <title>Identification and characterization of the genes encoding three structural proteins of the Sulfolobus virus-like particle SSV1.</title>
        <authorList>
            <person name="Reiter W.-D."/>
            <person name="Palm P."/>
            <person name="Henschen A."/>
            <person name="Lottspeich F."/>
            <person name="Zillig W."/>
            <person name="Grampp B."/>
        </authorList>
    </citation>
    <scope>NUCLEOTIDE SEQUENCE [GENOMIC DNA]</scope>
    <scope>PROTEIN SEQUENCE OF 1-16</scope>
</reference>
<reference key="2">
    <citation type="journal article" date="1991" name="Virology">
        <title>Complete nucleotide sequence of the virus SSV1 of the archaebacterium Sulfolobus shibatae.</title>
        <authorList>
            <person name="Palm P."/>
            <person name="Schleper C."/>
            <person name="Grampp B."/>
            <person name="Yeats S."/>
            <person name="McWilliam P."/>
            <person name="Reiter W.-D."/>
            <person name="Zillig W."/>
        </authorList>
    </citation>
    <scope>NUCLEOTIDE SEQUENCE [GENOMIC DNA]</scope>
</reference>
<reference key="3">
    <citation type="journal article" date="1999" name="Genetics">
        <title>Genetic requirements for the function of the archaeal virus SSV1 in Sulfolobus solfataricus: construction and testing of viral shuttle vectors.</title>
        <authorList>
            <person name="Stedman K.M."/>
            <person name="Schleper C."/>
            <person name="Rumpf E."/>
            <person name="Zillig W."/>
        </authorList>
    </citation>
    <scope>FUNCTION</scope>
</reference>
<evidence type="ECO:0000269" key="1">
    <source>
    </source>
</evidence>
<evidence type="ECO:0000305" key="2"/>
<organismHost>
    <name type="scientific">Saccharolobus solfataricus</name>
    <name type="common">Sulfolobus solfataricus</name>
    <dbReference type="NCBI Taxonomy" id="2287"/>
</organismHost>
<sequence length="74" mass="8827">MKWVQKAIKRPGRVHRYLMRLYGKRAFTKDGDIKASYLDKAIKHVKKAKIPKEKKRSLLSALLLAKRLKRMHRK</sequence>
<feature type="chain" id="PRO_0000223010" description="Capsid protein VP2">
    <location>
        <begin position="1"/>
        <end position="74"/>
    </location>
</feature>
<comment type="function">
    <text evidence="1">This extremely basic protein may tightly bind to SSV1 DNA. Essential for virus function.</text>
</comment>
<comment type="subcellular location">
    <subcellularLocation>
        <location evidence="2">Virion</location>
    </subcellularLocation>
</comment>
<organism>
    <name type="scientific">Sulfolobus spindle-shape virus 1</name>
    <name type="common">SSV1</name>
    <dbReference type="NCBI Taxonomy" id="244589"/>
    <lineage>
        <taxon>Viruses</taxon>
        <taxon>Viruses incertae sedis</taxon>
        <taxon>Fuselloviridae</taxon>
        <taxon>Alphafusellovirus</taxon>
    </lineage>
</organism>
<name>VP2_SSV1</name>